<evidence type="ECO:0000255" key="1">
    <source>
        <dbReference type="HAMAP-Rule" id="MF_00817"/>
    </source>
</evidence>
<proteinExistence type="inferred from homology"/>
<feature type="chain" id="PRO_1000134287" description="NADPH-dependent 7-cyano-7-deazaguanine reductase">
    <location>
        <begin position="1"/>
        <end position="275"/>
    </location>
</feature>
<feature type="active site" description="Thioimide intermediate" evidence="1">
    <location>
        <position position="181"/>
    </location>
</feature>
<feature type="active site" description="Proton donor" evidence="1">
    <location>
        <position position="188"/>
    </location>
</feature>
<feature type="binding site" evidence="1">
    <location>
        <begin position="81"/>
        <end position="83"/>
    </location>
    <ligand>
        <name>substrate</name>
    </ligand>
</feature>
<feature type="binding site" evidence="1">
    <location>
        <begin position="83"/>
        <end position="84"/>
    </location>
    <ligand>
        <name>NADPH</name>
        <dbReference type="ChEBI" id="CHEBI:57783"/>
    </ligand>
</feature>
<feature type="binding site" evidence="1">
    <location>
        <begin position="220"/>
        <end position="221"/>
    </location>
    <ligand>
        <name>substrate</name>
    </ligand>
</feature>
<feature type="binding site" evidence="1">
    <location>
        <begin position="249"/>
        <end position="250"/>
    </location>
    <ligand>
        <name>NADPH</name>
        <dbReference type="ChEBI" id="CHEBI:57783"/>
    </ligand>
</feature>
<accession>B0U3N1</accession>
<reference key="1">
    <citation type="journal article" date="2010" name="J. Bacteriol.">
        <title>Whole genome sequences of two Xylella fastidiosa strains (M12 and M23) causing almond leaf scorch disease in California.</title>
        <authorList>
            <person name="Chen J."/>
            <person name="Xie G."/>
            <person name="Han S."/>
            <person name="Chertkov O."/>
            <person name="Sims D."/>
            <person name="Civerolo E.L."/>
        </authorList>
    </citation>
    <scope>NUCLEOTIDE SEQUENCE [LARGE SCALE GENOMIC DNA]</scope>
    <source>
        <strain>M12</strain>
    </source>
</reference>
<comment type="function">
    <text evidence="1">Catalyzes the NADPH-dependent reduction of 7-cyano-7-deazaguanine (preQ0) to 7-aminomethyl-7-deazaguanine (preQ1).</text>
</comment>
<comment type="catalytic activity">
    <reaction evidence="1">
        <text>7-aminomethyl-7-carbaguanine + 2 NADP(+) = 7-cyano-7-deazaguanine + 2 NADPH + 3 H(+)</text>
        <dbReference type="Rhea" id="RHEA:13409"/>
        <dbReference type="ChEBI" id="CHEBI:15378"/>
        <dbReference type="ChEBI" id="CHEBI:45075"/>
        <dbReference type="ChEBI" id="CHEBI:57783"/>
        <dbReference type="ChEBI" id="CHEBI:58349"/>
        <dbReference type="ChEBI" id="CHEBI:58703"/>
        <dbReference type="EC" id="1.7.1.13"/>
    </reaction>
</comment>
<comment type="pathway">
    <text evidence="1">tRNA modification; tRNA-queuosine biosynthesis.</text>
</comment>
<comment type="subunit">
    <text evidence="1">Homodimer.</text>
</comment>
<comment type="subcellular location">
    <subcellularLocation>
        <location evidence="1">Cytoplasm</location>
    </subcellularLocation>
</comment>
<comment type="similarity">
    <text evidence="1">Belongs to the GTP cyclohydrolase I family. QueF type 2 subfamily.</text>
</comment>
<organism>
    <name type="scientific">Xylella fastidiosa (strain M12)</name>
    <dbReference type="NCBI Taxonomy" id="405440"/>
    <lineage>
        <taxon>Bacteria</taxon>
        <taxon>Pseudomonadati</taxon>
        <taxon>Pseudomonadota</taxon>
        <taxon>Gammaproteobacteria</taxon>
        <taxon>Lysobacterales</taxon>
        <taxon>Lysobacteraceae</taxon>
        <taxon>Xylella</taxon>
    </lineage>
</organism>
<gene>
    <name evidence="1" type="primary">queF</name>
    <name type="ordered locus">Xfasm12_1548</name>
</gene>
<protein>
    <recommendedName>
        <fullName evidence="1">NADPH-dependent 7-cyano-7-deazaguanine reductase</fullName>
        <ecNumber evidence="1">1.7.1.13</ecNumber>
    </recommendedName>
    <alternativeName>
        <fullName evidence="1">7-cyano-7-carbaguanine reductase</fullName>
    </alternativeName>
    <alternativeName>
        <fullName evidence="1">NADPH-dependent nitrile oxidoreductase</fullName>
    </alternativeName>
    <alternativeName>
        <fullName evidence="1">PreQ(0) reductase</fullName>
    </alternativeName>
</protein>
<name>QUEF_XYLFM</name>
<dbReference type="EC" id="1.7.1.13" evidence="1"/>
<dbReference type="EMBL" id="CP000941">
    <property type="protein sequence ID" value="ACA12460.1"/>
    <property type="molecule type" value="Genomic_DNA"/>
</dbReference>
<dbReference type="RefSeq" id="WP_012337979.1">
    <property type="nucleotide sequence ID" value="NC_010513.1"/>
</dbReference>
<dbReference type="SMR" id="B0U3N1"/>
<dbReference type="KEGG" id="xfm:Xfasm12_1548"/>
<dbReference type="HOGENOM" id="CLU_054738_0_0_6"/>
<dbReference type="UniPathway" id="UPA00392"/>
<dbReference type="GO" id="GO:0005737">
    <property type="term" value="C:cytoplasm"/>
    <property type="evidence" value="ECO:0007669"/>
    <property type="project" value="UniProtKB-SubCell"/>
</dbReference>
<dbReference type="GO" id="GO:0033739">
    <property type="term" value="F:preQ1 synthase activity"/>
    <property type="evidence" value="ECO:0007669"/>
    <property type="project" value="UniProtKB-UniRule"/>
</dbReference>
<dbReference type="GO" id="GO:0008616">
    <property type="term" value="P:queuosine biosynthetic process"/>
    <property type="evidence" value="ECO:0007669"/>
    <property type="project" value="UniProtKB-UniRule"/>
</dbReference>
<dbReference type="GO" id="GO:0006400">
    <property type="term" value="P:tRNA modification"/>
    <property type="evidence" value="ECO:0007669"/>
    <property type="project" value="UniProtKB-UniRule"/>
</dbReference>
<dbReference type="Gene3D" id="3.30.1130.10">
    <property type="match status" value="2"/>
</dbReference>
<dbReference type="HAMAP" id="MF_00817">
    <property type="entry name" value="QueF_type2"/>
    <property type="match status" value="1"/>
</dbReference>
<dbReference type="InterPro" id="IPR043133">
    <property type="entry name" value="GTP-CH-I_C/QueF"/>
</dbReference>
<dbReference type="InterPro" id="IPR050084">
    <property type="entry name" value="NADPH_dep_7-cyano-7-deazaG_red"/>
</dbReference>
<dbReference type="InterPro" id="IPR029500">
    <property type="entry name" value="QueF"/>
</dbReference>
<dbReference type="InterPro" id="IPR029139">
    <property type="entry name" value="QueF_N"/>
</dbReference>
<dbReference type="InterPro" id="IPR016428">
    <property type="entry name" value="QueF_type2"/>
</dbReference>
<dbReference type="NCBIfam" id="TIGR03138">
    <property type="entry name" value="QueF"/>
    <property type="match status" value="1"/>
</dbReference>
<dbReference type="PANTHER" id="PTHR34354">
    <property type="entry name" value="NADPH-DEPENDENT 7-CYANO-7-DEAZAGUANINE REDUCTASE"/>
    <property type="match status" value="1"/>
</dbReference>
<dbReference type="PANTHER" id="PTHR34354:SF1">
    <property type="entry name" value="NADPH-DEPENDENT 7-CYANO-7-DEAZAGUANINE REDUCTASE"/>
    <property type="match status" value="1"/>
</dbReference>
<dbReference type="Pfam" id="PF14489">
    <property type="entry name" value="QueF"/>
    <property type="match status" value="1"/>
</dbReference>
<dbReference type="Pfam" id="PF14819">
    <property type="entry name" value="QueF_N"/>
    <property type="match status" value="1"/>
</dbReference>
<dbReference type="PIRSF" id="PIRSF004750">
    <property type="entry name" value="Nitrile_oxidored_YqcD_prd"/>
    <property type="match status" value="1"/>
</dbReference>
<dbReference type="SUPFAM" id="SSF55620">
    <property type="entry name" value="Tetrahydrobiopterin biosynthesis enzymes-like"/>
    <property type="match status" value="1"/>
</dbReference>
<sequence length="275" mass="30780">MNTSHYSVLGHTVPYPKVYDPSLLFPISRAVGRTQIGIGVVLPFVGEDRWHAYELSWLDARGKPCVATATFHVPCDSPYLIESKSLKLYLNSFSAEVFNRAEALRLRIAADLSACAGAAVAVEFGLPPVGGGDKEISLDRLNVDIEDYGPPNPDYLSNVAQNFVEEMVEETLTSTLFKSNCPVTGQPDWASVTVRYFGVPIDHEGLLRYFISFRHHAEFHEQCVERIFQDVLQRCAPQCLAVEARYTRRGGLDINPLRTTSEMAWPLSVFRDPRQ</sequence>
<keyword id="KW-0963">Cytoplasm</keyword>
<keyword id="KW-0521">NADP</keyword>
<keyword id="KW-0560">Oxidoreductase</keyword>
<keyword id="KW-0671">Queuosine biosynthesis</keyword>